<feature type="signal peptide" evidence="1">
    <location>
        <begin position="1" status="less than"/>
        <end position="15"/>
    </location>
</feature>
<feature type="propeptide" id="PRO_0000035049" evidence="6">
    <location>
        <begin position="16"/>
        <end position="41"/>
    </location>
</feature>
<feature type="peptide" id="PRO_0000035050" description="Conotoxin vc5b" evidence="3">
    <location>
        <begin position="43"/>
        <end position="53"/>
    </location>
</feature>
<feature type="modified residue" description="Glutamine amide" evidence="3">
    <location>
        <position position="53"/>
    </location>
</feature>
<feature type="non-terminal residue">
    <location>
        <position position="1"/>
    </location>
</feature>
<proteinExistence type="evidence at protein level"/>
<comment type="subcellular location">
    <subcellularLocation>
        <location evidence="2">Secreted</location>
    </subcellularLocation>
</comment>
<comment type="tissue specificity">
    <text evidence="7">Expressed by the venom duct.</text>
</comment>
<comment type="domain">
    <text evidence="6">The cysteine framework is V (CC-CC).</text>
</comment>
<comment type="PTM">
    <text evidence="6">Contains 2 disulfide bonds that can be either 'C1-C3, C2-C4' or 'C1-C4, C2-C3', since these disulfide connectivities have been observed for conotoxins with cysteine framework V (for examples, see AC P0DQQ7 and AC P81755).</text>
</comment>
<comment type="mass spectrometry"/>
<comment type="similarity">
    <text evidence="6">Belongs to the conotoxin T superfamily.</text>
</comment>
<organism>
    <name type="scientific">Conus victoriae</name>
    <name type="common">Queen Victoria cone</name>
    <dbReference type="NCBI Taxonomy" id="319920"/>
    <lineage>
        <taxon>Eukaryota</taxon>
        <taxon>Metazoa</taxon>
        <taxon>Spiralia</taxon>
        <taxon>Lophotrochozoa</taxon>
        <taxon>Mollusca</taxon>
        <taxon>Gastropoda</taxon>
        <taxon>Caenogastropoda</taxon>
        <taxon>Neogastropoda</taxon>
        <taxon>Conoidea</taxon>
        <taxon>Conidae</taxon>
        <taxon>Conus</taxon>
        <taxon>Cylinder</taxon>
    </lineage>
</organism>
<accession>P69768</accession>
<keyword id="KW-0027">Amidation</keyword>
<keyword id="KW-1015">Disulfide bond</keyword>
<keyword id="KW-0872">Ion channel impairing toxin</keyword>
<keyword id="KW-0528">Neurotoxin</keyword>
<keyword id="KW-0964">Secreted</keyword>
<keyword id="KW-0732">Signal</keyword>
<keyword id="KW-0800">Toxin</keyword>
<dbReference type="ConoServer" id="1548">
    <property type="toxin name" value="VcVB precursor"/>
</dbReference>
<dbReference type="GO" id="GO:0005576">
    <property type="term" value="C:extracellular region"/>
    <property type="evidence" value="ECO:0007669"/>
    <property type="project" value="UniProtKB-SubCell"/>
</dbReference>
<dbReference type="GO" id="GO:0099106">
    <property type="term" value="F:ion channel regulator activity"/>
    <property type="evidence" value="ECO:0007669"/>
    <property type="project" value="UniProtKB-KW"/>
</dbReference>
<dbReference type="GO" id="GO:0090729">
    <property type="term" value="F:toxin activity"/>
    <property type="evidence" value="ECO:0007669"/>
    <property type="project" value="UniProtKB-KW"/>
</dbReference>
<dbReference type="InterPro" id="IPR031565">
    <property type="entry name" value="T-conotoxin"/>
</dbReference>
<dbReference type="Pfam" id="PF16981">
    <property type="entry name" value="Chi-conotoxin"/>
    <property type="match status" value="1"/>
</dbReference>
<name>CT5B_CONVC</name>
<protein>
    <recommendedName>
        <fullName evidence="5">Conotoxin vc5b</fullName>
    </recommendedName>
    <alternativeName>
        <fullName evidence="4">Vc5.4</fullName>
    </alternativeName>
</protein>
<reference key="1">
    <citation type="journal article" date="2004" name="J. Mass Spectrom.">
        <title>Determining sequences and post-translational modifications of novel conotoxins in Conus victoriae using cDNA sequencing and mass spectrometry.</title>
        <authorList>
            <person name="Jakubowski J.A."/>
            <person name="Keays D.A."/>
            <person name="Kelley W.P."/>
            <person name="Sandall D.W."/>
            <person name="Bingham J.-P."/>
            <person name="Livett B.G."/>
            <person name="Gayler K.R."/>
            <person name="Sweedler J.V."/>
        </authorList>
    </citation>
    <scope>NUCLEOTIDE SEQUENCE [MRNA]</scope>
    <source>
        <tissue>Venom duct</tissue>
    </source>
</reference>
<reference key="2">
    <citation type="journal article" date="2004" name="Anal. Chem.">
        <title>Sequencing and mass profiling highly modified conotoxins using global reduction/alkylation followed by mass spectrometry.</title>
        <authorList>
            <person name="Jakubowski J.A."/>
            <person name="Sweedler J.V."/>
        </authorList>
    </citation>
    <scope>MASS SPECTROMETRY</scope>
    <scope>AMIDATION AT GLN-53</scope>
    <scope>SUBCELLULAR LOCATION</scope>
    <source>
        <tissue>Venom</tissue>
    </source>
</reference>
<sequence>VILLLLIASAPSVDAQPKTKDDVPLAPLHDNAKSALQHLNQRCCQTFYWCCGQGK</sequence>
<evidence type="ECO:0000255" key="1"/>
<evidence type="ECO:0000269" key="2">
    <source>
    </source>
</evidence>
<evidence type="ECO:0000269" key="3">
    <source>
    </source>
</evidence>
<evidence type="ECO:0000303" key="4">
    <source>
    </source>
</evidence>
<evidence type="ECO:0000303" key="5">
    <source>
    </source>
</evidence>
<evidence type="ECO:0000305" key="6"/>
<evidence type="ECO:0000305" key="7">
    <source>
    </source>
</evidence>